<protein>
    <recommendedName>
        <fullName evidence="1">Large ribosomal subunit protein bL32</fullName>
    </recommendedName>
    <alternativeName>
        <fullName evidence="3">50S ribosomal protein L32</fullName>
    </alternativeName>
</protein>
<keyword id="KW-0687">Ribonucleoprotein</keyword>
<keyword id="KW-0689">Ribosomal protein</keyword>
<proteinExistence type="inferred from homology"/>
<accession>B8DJG3</accession>
<evidence type="ECO:0000255" key="1">
    <source>
        <dbReference type="HAMAP-Rule" id="MF_00340"/>
    </source>
</evidence>
<evidence type="ECO:0000256" key="2">
    <source>
        <dbReference type="SAM" id="MobiDB-lite"/>
    </source>
</evidence>
<evidence type="ECO:0000305" key="3"/>
<reference key="1">
    <citation type="submission" date="2008-10" db="EMBL/GenBank/DDBJ databases">
        <title>Complete sequence of Desulfovibrio vulgaris str. 'Miyazaki F'.</title>
        <authorList>
            <person name="Lucas S."/>
            <person name="Copeland A."/>
            <person name="Lapidus A."/>
            <person name="Glavina del Rio T."/>
            <person name="Dalin E."/>
            <person name="Tice H."/>
            <person name="Bruce D."/>
            <person name="Goodwin L."/>
            <person name="Pitluck S."/>
            <person name="Sims D."/>
            <person name="Brettin T."/>
            <person name="Detter J.C."/>
            <person name="Han C."/>
            <person name="Larimer F."/>
            <person name="Land M."/>
            <person name="Hauser L."/>
            <person name="Kyrpides N."/>
            <person name="Mikhailova N."/>
            <person name="Hazen T.C."/>
            <person name="Richardson P."/>
        </authorList>
    </citation>
    <scope>NUCLEOTIDE SEQUENCE [LARGE SCALE GENOMIC DNA]</scope>
    <source>
        <strain>DSM 19637 / Miyazaki F</strain>
    </source>
</reference>
<name>RL32_NITV9</name>
<feature type="chain" id="PRO_1000120115" description="Large ribosomal subunit protein bL32">
    <location>
        <begin position="1"/>
        <end position="59"/>
    </location>
</feature>
<feature type="region of interest" description="Disordered" evidence="2">
    <location>
        <begin position="1"/>
        <end position="20"/>
    </location>
</feature>
<feature type="compositionally biased region" description="Basic residues" evidence="2">
    <location>
        <begin position="7"/>
        <end position="19"/>
    </location>
</feature>
<comment type="similarity">
    <text evidence="1">Belongs to the bacterial ribosomal protein bL32 family.</text>
</comment>
<sequence length="59" mass="6486">MAVQQNKKSKSKKGMRRSHDRVAVPTIVYCACGEPTVPHRACPSCGTYKGRQVVAQPNE</sequence>
<gene>
    <name evidence="1" type="primary">rpmF</name>
    <name type="ordered locus">DvMF_3103</name>
</gene>
<organism>
    <name type="scientific">Nitratidesulfovibrio vulgaris (strain DSM 19637 / Miyazaki F)</name>
    <name type="common">Desulfovibrio vulgaris</name>
    <dbReference type="NCBI Taxonomy" id="883"/>
    <lineage>
        <taxon>Bacteria</taxon>
        <taxon>Pseudomonadati</taxon>
        <taxon>Thermodesulfobacteriota</taxon>
        <taxon>Desulfovibrionia</taxon>
        <taxon>Desulfovibrionales</taxon>
        <taxon>Desulfovibrionaceae</taxon>
        <taxon>Nitratidesulfovibrio</taxon>
    </lineage>
</organism>
<dbReference type="EMBL" id="CP001197">
    <property type="protein sequence ID" value="ACL10040.1"/>
    <property type="molecule type" value="Genomic_DNA"/>
</dbReference>
<dbReference type="SMR" id="B8DJG3"/>
<dbReference type="STRING" id="883.DvMF_3103"/>
<dbReference type="KEGG" id="dvm:DvMF_3103"/>
<dbReference type="eggNOG" id="COG0333">
    <property type="taxonomic scope" value="Bacteria"/>
</dbReference>
<dbReference type="HOGENOM" id="CLU_129084_1_3_7"/>
<dbReference type="OrthoDB" id="9801927at2"/>
<dbReference type="GO" id="GO:0015934">
    <property type="term" value="C:large ribosomal subunit"/>
    <property type="evidence" value="ECO:0007669"/>
    <property type="project" value="InterPro"/>
</dbReference>
<dbReference type="GO" id="GO:0003735">
    <property type="term" value="F:structural constituent of ribosome"/>
    <property type="evidence" value="ECO:0007669"/>
    <property type="project" value="InterPro"/>
</dbReference>
<dbReference type="GO" id="GO:0006412">
    <property type="term" value="P:translation"/>
    <property type="evidence" value="ECO:0007669"/>
    <property type="project" value="UniProtKB-UniRule"/>
</dbReference>
<dbReference type="HAMAP" id="MF_00340">
    <property type="entry name" value="Ribosomal_bL32"/>
    <property type="match status" value="1"/>
</dbReference>
<dbReference type="InterPro" id="IPR002677">
    <property type="entry name" value="Ribosomal_bL32"/>
</dbReference>
<dbReference type="InterPro" id="IPR044957">
    <property type="entry name" value="Ribosomal_bL32_bact"/>
</dbReference>
<dbReference type="InterPro" id="IPR011332">
    <property type="entry name" value="Ribosomal_zn-bd"/>
</dbReference>
<dbReference type="NCBIfam" id="TIGR01031">
    <property type="entry name" value="rpmF_bact"/>
    <property type="match status" value="1"/>
</dbReference>
<dbReference type="PANTHER" id="PTHR35534">
    <property type="entry name" value="50S RIBOSOMAL PROTEIN L32"/>
    <property type="match status" value="1"/>
</dbReference>
<dbReference type="PANTHER" id="PTHR35534:SF1">
    <property type="entry name" value="LARGE RIBOSOMAL SUBUNIT PROTEIN BL32"/>
    <property type="match status" value="1"/>
</dbReference>
<dbReference type="Pfam" id="PF01783">
    <property type="entry name" value="Ribosomal_L32p"/>
    <property type="match status" value="1"/>
</dbReference>
<dbReference type="SUPFAM" id="SSF57829">
    <property type="entry name" value="Zn-binding ribosomal proteins"/>
    <property type="match status" value="1"/>
</dbReference>